<organism>
    <name type="scientific">Blochmanniella floridana</name>
    <dbReference type="NCBI Taxonomy" id="203907"/>
    <lineage>
        <taxon>Bacteria</taxon>
        <taxon>Pseudomonadati</taxon>
        <taxon>Pseudomonadota</taxon>
        <taxon>Gammaproteobacteria</taxon>
        <taxon>Enterobacterales</taxon>
        <taxon>Enterobacteriaceae</taxon>
        <taxon>ant endosymbionts</taxon>
        <taxon>Candidatus Blochmanniella</taxon>
    </lineage>
</organism>
<keyword id="KW-0414">Isoprene biosynthesis</keyword>
<keyword id="KW-0460">Magnesium</keyword>
<keyword id="KW-0479">Metal-binding</keyword>
<keyword id="KW-1185">Reference proteome</keyword>
<keyword id="KW-0784">Thiamine biosynthesis</keyword>
<keyword id="KW-0786">Thiamine pyrophosphate</keyword>
<keyword id="KW-0808">Transferase</keyword>
<evidence type="ECO:0000255" key="1">
    <source>
        <dbReference type="HAMAP-Rule" id="MF_00315"/>
    </source>
</evidence>
<gene>
    <name evidence="1" type="primary">dxs</name>
    <name type="ordered locus">Bfl238</name>
</gene>
<sequence length="617" mass="68722">MSLKLNKYSILELIDTPTELRQLTENKLQTLCSELRLFLLNSVSKSSGHFASGLGTIELTVALHYVYNTPFDHLIWDVGHQAYPHKILTGRKNRIYSIRQRHGLHSFPCRNESKYDVLSVGHSSTSISAGLGLAIASEREKLNRRTVCIIGDGALTAGMAFEAINHAGTIKSNLLIILNDNNMSISENVGALHTQCPQQKKYTNITSDIKKIINSNIYNKNKNTSTAIALFSNLGFNCTGPIDGHNILTLIHNLKNIRNTKTGPQFLHVITKKGYGYKPAEKDPIKWHAVPKFNLKSGILSTNKNIKYTTYSKIFGDWLCQTAMHDNKIIGITPAMREGSGMNKFAQKYPKQYFDVAIAEQHAVTFSAGLAIAGYKPVVAIYSTFLQRAYDQIIHDIAIQKLPVLFAVDRGGIVGSDGETHQGAFDLSYLRCIPNLIIMTPSNAYECKLMLHTGYHYQYGPSVVRYPKGCATNNILYPYNNTTSLYSIPLSKGIIHHQGQHIAILNFGTLLKPAYNVALQLNATLVDMRFVKPLDEMLIKKLTENHQAFITLEENSIIGGAGSGVNEFLVQNKLLIPTLNIGLPDFFIPQGAQREMLSELGLDSQGIYKKIVRWIKI</sequence>
<proteinExistence type="inferred from homology"/>
<dbReference type="EC" id="2.2.1.7" evidence="1"/>
<dbReference type="EMBL" id="BX248583">
    <property type="protein sequence ID" value="CAD83309.1"/>
    <property type="molecule type" value="Genomic_DNA"/>
</dbReference>
<dbReference type="SMR" id="Q7VRH9"/>
<dbReference type="STRING" id="203907.Bfl238"/>
<dbReference type="KEGG" id="bfl:Bfl238"/>
<dbReference type="eggNOG" id="COG1154">
    <property type="taxonomic scope" value="Bacteria"/>
</dbReference>
<dbReference type="HOGENOM" id="CLU_009227_1_4_6"/>
<dbReference type="OrthoDB" id="9803371at2"/>
<dbReference type="UniPathway" id="UPA00064">
    <property type="reaction ID" value="UER00091"/>
</dbReference>
<dbReference type="Proteomes" id="UP000002192">
    <property type="component" value="Chromosome"/>
</dbReference>
<dbReference type="GO" id="GO:0005829">
    <property type="term" value="C:cytosol"/>
    <property type="evidence" value="ECO:0007669"/>
    <property type="project" value="TreeGrafter"/>
</dbReference>
<dbReference type="GO" id="GO:0008661">
    <property type="term" value="F:1-deoxy-D-xylulose-5-phosphate synthase activity"/>
    <property type="evidence" value="ECO:0007669"/>
    <property type="project" value="UniProtKB-UniRule"/>
</dbReference>
<dbReference type="GO" id="GO:0000287">
    <property type="term" value="F:magnesium ion binding"/>
    <property type="evidence" value="ECO:0007669"/>
    <property type="project" value="UniProtKB-UniRule"/>
</dbReference>
<dbReference type="GO" id="GO:0030976">
    <property type="term" value="F:thiamine pyrophosphate binding"/>
    <property type="evidence" value="ECO:0007669"/>
    <property type="project" value="UniProtKB-UniRule"/>
</dbReference>
<dbReference type="GO" id="GO:0052865">
    <property type="term" value="P:1-deoxy-D-xylulose 5-phosphate biosynthetic process"/>
    <property type="evidence" value="ECO:0007669"/>
    <property type="project" value="UniProtKB-UniPathway"/>
</dbReference>
<dbReference type="GO" id="GO:0019288">
    <property type="term" value="P:isopentenyl diphosphate biosynthetic process, methylerythritol 4-phosphate pathway"/>
    <property type="evidence" value="ECO:0007669"/>
    <property type="project" value="TreeGrafter"/>
</dbReference>
<dbReference type="GO" id="GO:0016114">
    <property type="term" value="P:terpenoid biosynthetic process"/>
    <property type="evidence" value="ECO:0007669"/>
    <property type="project" value="UniProtKB-UniRule"/>
</dbReference>
<dbReference type="GO" id="GO:0009228">
    <property type="term" value="P:thiamine biosynthetic process"/>
    <property type="evidence" value="ECO:0007669"/>
    <property type="project" value="UniProtKB-UniRule"/>
</dbReference>
<dbReference type="CDD" id="cd02007">
    <property type="entry name" value="TPP_DXS"/>
    <property type="match status" value="1"/>
</dbReference>
<dbReference type="CDD" id="cd07033">
    <property type="entry name" value="TPP_PYR_DXS_TK_like"/>
    <property type="match status" value="1"/>
</dbReference>
<dbReference type="FunFam" id="3.40.50.920:FF:000002">
    <property type="entry name" value="1-deoxy-D-xylulose-5-phosphate synthase"/>
    <property type="match status" value="1"/>
</dbReference>
<dbReference type="FunFam" id="3.40.50.970:FF:000005">
    <property type="entry name" value="1-deoxy-D-xylulose-5-phosphate synthase"/>
    <property type="match status" value="1"/>
</dbReference>
<dbReference type="Gene3D" id="3.40.50.920">
    <property type="match status" value="1"/>
</dbReference>
<dbReference type="Gene3D" id="3.40.50.970">
    <property type="match status" value="2"/>
</dbReference>
<dbReference type="HAMAP" id="MF_00315">
    <property type="entry name" value="DXP_synth"/>
    <property type="match status" value="1"/>
</dbReference>
<dbReference type="InterPro" id="IPR005477">
    <property type="entry name" value="Dxylulose-5-P_synthase"/>
</dbReference>
<dbReference type="InterPro" id="IPR029061">
    <property type="entry name" value="THDP-binding"/>
</dbReference>
<dbReference type="InterPro" id="IPR009014">
    <property type="entry name" value="Transketo_C/PFOR_II"/>
</dbReference>
<dbReference type="InterPro" id="IPR005475">
    <property type="entry name" value="Transketolase-like_Pyr-bd"/>
</dbReference>
<dbReference type="InterPro" id="IPR020826">
    <property type="entry name" value="Transketolase_BS"/>
</dbReference>
<dbReference type="InterPro" id="IPR033248">
    <property type="entry name" value="Transketolase_C"/>
</dbReference>
<dbReference type="InterPro" id="IPR049557">
    <property type="entry name" value="Transketolase_CS"/>
</dbReference>
<dbReference type="NCBIfam" id="TIGR00204">
    <property type="entry name" value="dxs"/>
    <property type="match status" value="1"/>
</dbReference>
<dbReference type="NCBIfam" id="NF003933">
    <property type="entry name" value="PRK05444.2-2"/>
    <property type="match status" value="1"/>
</dbReference>
<dbReference type="PANTHER" id="PTHR43322">
    <property type="entry name" value="1-D-DEOXYXYLULOSE 5-PHOSPHATE SYNTHASE-RELATED"/>
    <property type="match status" value="1"/>
</dbReference>
<dbReference type="PANTHER" id="PTHR43322:SF5">
    <property type="entry name" value="1-DEOXY-D-XYLULOSE-5-PHOSPHATE SYNTHASE, CHLOROPLASTIC"/>
    <property type="match status" value="1"/>
</dbReference>
<dbReference type="Pfam" id="PF13292">
    <property type="entry name" value="DXP_synthase_N"/>
    <property type="match status" value="1"/>
</dbReference>
<dbReference type="Pfam" id="PF02779">
    <property type="entry name" value="Transket_pyr"/>
    <property type="match status" value="1"/>
</dbReference>
<dbReference type="Pfam" id="PF02780">
    <property type="entry name" value="Transketolase_C"/>
    <property type="match status" value="1"/>
</dbReference>
<dbReference type="SMART" id="SM00861">
    <property type="entry name" value="Transket_pyr"/>
    <property type="match status" value="1"/>
</dbReference>
<dbReference type="SUPFAM" id="SSF52518">
    <property type="entry name" value="Thiamin diphosphate-binding fold (THDP-binding)"/>
    <property type="match status" value="2"/>
</dbReference>
<dbReference type="SUPFAM" id="SSF52922">
    <property type="entry name" value="TK C-terminal domain-like"/>
    <property type="match status" value="1"/>
</dbReference>
<dbReference type="PROSITE" id="PS00801">
    <property type="entry name" value="TRANSKETOLASE_1"/>
    <property type="match status" value="1"/>
</dbReference>
<dbReference type="PROSITE" id="PS00802">
    <property type="entry name" value="TRANSKETOLASE_2"/>
    <property type="match status" value="1"/>
</dbReference>
<accession>Q7VRH9</accession>
<protein>
    <recommendedName>
        <fullName evidence="1">1-deoxy-D-xylulose-5-phosphate synthase</fullName>
        <ecNumber evidence="1">2.2.1.7</ecNumber>
    </recommendedName>
    <alternativeName>
        <fullName evidence="1">1-deoxyxylulose-5-phosphate synthase</fullName>
        <shortName evidence="1">DXP synthase</shortName>
        <shortName evidence="1">DXPS</shortName>
    </alternativeName>
</protein>
<name>DXS_BLOFL</name>
<feature type="chain" id="PRO_0000189097" description="1-deoxy-D-xylulose-5-phosphate synthase">
    <location>
        <begin position="1"/>
        <end position="617"/>
    </location>
</feature>
<feature type="binding site" evidence="1">
    <location>
        <position position="80"/>
    </location>
    <ligand>
        <name>thiamine diphosphate</name>
        <dbReference type="ChEBI" id="CHEBI:58937"/>
    </ligand>
</feature>
<feature type="binding site" evidence="1">
    <location>
        <begin position="121"/>
        <end position="123"/>
    </location>
    <ligand>
        <name>thiamine diphosphate</name>
        <dbReference type="ChEBI" id="CHEBI:58937"/>
    </ligand>
</feature>
<feature type="binding site" evidence="1">
    <location>
        <position position="152"/>
    </location>
    <ligand>
        <name>Mg(2+)</name>
        <dbReference type="ChEBI" id="CHEBI:18420"/>
    </ligand>
</feature>
<feature type="binding site" evidence="1">
    <location>
        <begin position="153"/>
        <end position="154"/>
    </location>
    <ligand>
        <name>thiamine diphosphate</name>
        <dbReference type="ChEBI" id="CHEBI:58937"/>
    </ligand>
</feature>
<feature type="binding site" evidence="1">
    <location>
        <position position="181"/>
    </location>
    <ligand>
        <name>Mg(2+)</name>
        <dbReference type="ChEBI" id="CHEBI:18420"/>
    </ligand>
</feature>
<feature type="binding site" evidence="1">
    <location>
        <position position="181"/>
    </location>
    <ligand>
        <name>thiamine diphosphate</name>
        <dbReference type="ChEBI" id="CHEBI:58937"/>
    </ligand>
</feature>
<feature type="binding site" evidence="1">
    <location>
        <position position="277"/>
    </location>
    <ligand>
        <name>thiamine diphosphate</name>
        <dbReference type="ChEBI" id="CHEBI:58937"/>
    </ligand>
</feature>
<feature type="binding site" evidence="1">
    <location>
        <position position="360"/>
    </location>
    <ligand>
        <name>thiamine diphosphate</name>
        <dbReference type="ChEBI" id="CHEBI:58937"/>
    </ligand>
</feature>
<comment type="function">
    <text evidence="1">Catalyzes the acyloin condensation reaction between C atoms 2 and 3 of pyruvate and glyceraldehyde 3-phosphate to yield 1-deoxy-D-xylulose-5-phosphate (DXP).</text>
</comment>
<comment type="catalytic activity">
    <reaction evidence="1">
        <text>D-glyceraldehyde 3-phosphate + pyruvate + H(+) = 1-deoxy-D-xylulose 5-phosphate + CO2</text>
        <dbReference type="Rhea" id="RHEA:12605"/>
        <dbReference type="ChEBI" id="CHEBI:15361"/>
        <dbReference type="ChEBI" id="CHEBI:15378"/>
        <dbReference type="ChEBI" id="CHEBI:16526"/>
        <dbReference type="ChEBI" id="CHEBI:57792"/>
        <dbReference type="ChEBI" id="CHEBI:59776"/>
        <dbReference type="EC" id="2.2.1.7"/>
    </reaction>
</comment>
<comment type="cofactor">
    <cofactor evidence="1">
        <name>Mg(2+)</name>
        <dbReference type="ChEBI" id="CHEBI:18420"/>
    </cofactor>
    <text evidence="1">Binds 1 Mg(2+) ion per subunit.</text>
</comment>
<comment type="cofactor">
    <cofactor evidence="1">
        <name>thiamine diphosphate</name>
        <dbReference type="ChEBI" id="CHEBI:58937"/>
    </cofactor>
    <text evidence="1">Binds 1 thiamine pyrophosphate per subunit.</text>
</comment>
<comment type="pathway">
    <text evidence="1">Metabolic intermediate biosynthesis; 1-deoxy-D-xylulose 5-phosphate biosynthesis; 1-deoxy-D-xylulose 5-phosphate from D-glyceraldehyde 3-phosphate and pyruvate: step 1/1.</text>
</comment>
<comment type="subunit">
    <text evidence="1">Homodimer.</text>
</comment>
<comment type="similarity">
    <text evidence="1">Belongs to the transketolase family. DXPS subfamily.</text>
</comment>
<reference key="1">
    <citation type="journal article" date="2003" name="Proc. Natl. Acad. Sci. U.S.A.">
        <title>The genome sequence of Blochmannia floridanus: comparative analysis of reduced genomes.</title>
        <authorList>
            <person name="Gil R."/>
            <person name="Silva F.J."/>
            <person name="Zientz E."/>
            <person name="Delmotte F."/>
            <person name="Gonzalez-Candelas F."/>
            <person name="Latorre A."/>
            <person name="Rausell C."/>
            <person name="Kamerbeek J."/>
            <person name="Gadau J."/>
            <person name="Hoelldobler B."/>
            <person name="van Ham R.C.H.J."/>
            <person name="Gross R."/>
            <person name="Moya A."/>
        </authorList>
    </citation>
    <scope>NUCLEOTIDE SEQUENCE [LARGE SCALE GENOMIC DNA]</scope>
</reference>